<accession>C1C673</accession>
<feature type="chain" id="PRO_0000383897" description="Hydroxyethylthiazole kinase 2">
    <location>
        <begin position="1"/>
        <end position="267"/>
    </location>
</feature>
<feature type="binding site" evidence="1">
    <location>
        <position position="41"/>
    </location>
    <ligand>
        <name>substrate</name>
    </ligand>
</feature>
<feature type="binding site" evidence="1">
    <location>
        <position position="116"/>
    </location>
    <ligand>
        <name>ATP</name>
        <dbReference type="ChEBI" id="CHEBI:30616"/>
    </ligand>
</feature>
<feature type="binding site" evidence="1">
    <location>
        <position position="166"/>
    </location>
    <ligand>
        <name>ATP</name>
        <dbReference type="ChEBI" id="CHEBI:30616"/>
    </ligand>
</feature>
<feature type="binding site" evidence="1">
    <location>
        <position position="193"/>
    </location>
    <ligand>
        <name>substrate</name>
    </ligand>
</feature>
<protein>
    <recommendedName>
        <fullName evidence="1">Hydroxyethylthiazole kinase 2</fullName>
        <ecNumber evidence="1">2.7.1.50</ecNumber>
    </recommendedName>
    <alternativeName>
        <fullName evidence="1">4-methyl-5-beta-hydroxyethylthiazole kinase 2</fullName>
        <shortName evidence="1">TH kinase 2</shortName>
        <shortName evidence="1">Thz kinase 2</shortName>
    </alternativeName>
</protein>
<keyword id="KW-0067">ATP-binding</keyword>
<keyword id="KW-0418">Kinase</keyword>
<keyword id="KW-0460">Magnesium</keyword>
<keyword id="KW-0479">Metal-binding</keyword>
<keyword id="KW-0547">Nucleotide-binding</keyword>
<keyword id="KW-0784">Thiamine biosynthesis</keyword>
<keyword id="KW-0808">Transferase</keyword>
<sequence length="267" mass="29182">MQEFTNPFPIGSSSLIHCMTNEISCEMLANGILALGCKPVMADDPREVLDFTKQSQALFINLGHLSAEKEKAIRMAASYANQSSLPMVVDAVGVTTSSIRKSLVKDLLDYRPTVIKGNMSEIRSLVGLKHHGVGVDASAKDQETEDLLQVLKDWCQTYPGMSFLVTGPKDLVVSKNQVAVLENGCTELDWITGTGDLVGALTAVFLSQGKTGFEASCLAVSYLNIAAEKIVVQGMGLEEFRYQVLNQLSLLRRDENWLDTIKGEVYE</sequence>
<comment type="function">
    <text evidence="1">Catalyzes the phosphorylation of the hydroxyl group of 4-methyl-5-beta-hydroxyethylthiazole (THZ).</text>
</comment>
<comment type="catalytic activity">
    <reaction evidence="1">
        <text>5-(2-hydroxyethyl)-4-methylthiazole + ATP = 4-methyl-5-(2-phosphooxyethyl)-thiazole + ADP + H(+)</text>
        <dbReference type="Rhea" id="RHEA:24212"/>
        <dbReference type="ChEBI" id="CHEBI:15378"/>
        <dbReference type="ChEBI" id="CHEBI:17957"/>
        <dbReference type="ChEBI" id="CHEBI:30616"/>
        <dbReference type="ChEBI" id="CHEBI:58296"/>
        <dbReference type="ChEBI" id="CHEBI:456216"/>
        <dbReference type="EC" id="2.7.1.50"/>
    </reaction>
</comment>
<comment type="cofactor">
    <cofactor evidence="1">
        <name>Mg(2+)</name>
        <dbReference type="ChEBI" id="CHEBI:18420"/>
    </cofactor>
</comment>
<comment type="pathway">
    <text evidence="1">Cofactor biosynthesis; thiamine diphosphate biosynthesis; 4-methyl-5-(2-phosphoethyl)-thiazole from 5-(2-hydroxyethyl)-4-methylthiazole: step 1/1.</text>
</comment>
<comment type="similarity">
    <text evidence="1">Belongs to the Thz kinase family.</text>
</comment>
<name>THIM2_STRP7</name>
<reference key="1">
    <citation type="journal article" date="2010" name="Genome Biol.">
        <title>Structure and dynamics of the pan-genome of Streptococcus pneumoniae and closely related species.</title>
        <authorList>
            <person name="Donati C."/>
            <person name="Hiller N.L."/>
            <person name="Tettelin H."/>
            <person name="Muzzi A."/>
            <person name="Croucher N.J."/>
            <person name="Angiuoli S.V."/>
            <person name="Oggioni M."/>
            <person name="Dunning Hotopp J.C."/>
            <person name="Hu F.Z."/>
            <person name="Riley D.R."/>
            <person name="Covacci A."/>
            <person name="Mitchell T.J."/>
            <person name="Bentley S.D."/>
            <person name="Kilian M."/>
            <person name="Ehrlich G.D."/>
            <person name="Rappuoli R."/>
            <person name="Moxon E.R."/>
            <person name="Masignani V."/>
        </authorList>
    </citation>
    <scope>NUCLEOTIDE SEQUENCE [LARGE SCALE GENOMIC DNA]</scope>
    <source>
        <strain>70585</strain>
    </source>
</reference>
<gene>
    <name evidence="1" type="primary">thiM2</name>
    <name type="ordered locus">SP70585_0771</name>
</gene>
<dbReference type="EC" id="2.7.1.50" evidence="1"/>
<dbReference type="EMBL" id="CP000918">
    <property type="protein sequence ID" value="ACO16608.1"/>
    <property type="molecule type" value="Genomic_DNA"/>
</dbReference>
<dbReference type="RefSeq" id="WP_001155191.1">
    <property type="nucleotide sequence ID" value="NC_012468.1"/>
</dbReference>
<dbReference type="SMR" id="C1C673"/>
<dbReference type="KEGG" id="snm:SP70585_0771"/>
<dbReference type="HOGENOM" id="CLU_019943_0_0_9"/>
<dbReference type="UniPathway" id="UPA00060">
    <property type="reaction ID" value="UER00139"/>
</dbReference>
<dbReference type="Proteomes" id="UP000002211">
    <property type="component" value="Chromosome"/>
</dbReference>
<dbReference type="GO" id="GO:0005524">
    <property type="term" value="F:ATP binding"/>
    <property type="evidence" value="ECO:0007669"/>
    <property type="project" value="UniProtKB-UniRule"/>
</dbReference>
<dbReference type="GO" id="GO:0004417">
    <property type="term" value="F:hydroxyethylthiazole kinase activity"/>
    <property type="evidence" value="ECO:0007669"/>
    <property type="project" value="UniProtKB-UniRule"/>
</dbReference>
<dbReference type="GO" id="GO:0000287">
    <property type="term" value="F:magnesium ion binding"/>
    <property type="evidence" value="ECO:0007669"/>
    <property type="project" value="UniProtKB-UniRule"/>
</dbReference>
<dbReference type="GO" id="GO:0009228">
    <property type="term" value="P:thiamine biosynthetic process"/>
    <property type="evidence" value="ECO:0007669"/>
    <property type="project" value="UniProtKB-KW"/>
</dbReference>
<dbReference type="GO" id="GO:0009229">
    <property type="term" value="P:thiamine diphosphate biosynthetic process"/>
    <property type="evidence" value="ECO:0007669"/>
    <property type="project" value="UniProtKB-UniRule"/>
</dbReference>
<dbReference type="CDD" id="cd01170">
    <property type="entry name" value="THZ_kinase"/>
    <property type="match status" value="1"/>
</dbReference>
<dbReference type="Gene3D" id="3.40.1190.20">
    <property type="match status" value="1"/>
</dbReference>
<dbReference type="HAMAP" id="MF_00228">
    <property type="entry name" value="Thz_kinase"/>
    <property type="match status" value="1"/>
</dbReference>
<dbReference type="InterPro" id="IPR000417">
    <property type="entry name" value="Hyethyz_kinase"/>
</dbReference>
<dbReference type="InterPro" id="IPR029056">
    <property type="entry name" value="Ribokinase-like"/>
</dbReference>
<dbReference type="Pfam" id="PF02110">
    <property type="entry name" value="HK"/>
    <property type="match status" value="1"/>
</dbReference>
<dbReference type="PIRSF" id="PIRSF000513">
    <property type="entry name" value="Thz_kinase"/>
    <property type="match status" value="1"/>
</dbReference>
<dbReference type="PRINTS" id="PR01099">
    <property type="entry name" value="HYETHTZKNASE"/>
</dbReference>
<dbReference type="SUPFAM" id="SSF53613">
    <property type="entry name" value="Ribokinase-like"/>
    <property type="match status" value="1"/>
</dbReference>
<evidence type="ECO:0000255" key="1">
    <source>
        <dbReference type="HAMAP-Rule" id="MF_00228"/>
    </source>
</evidence>
<organism>
    <name type="scientific">Streptococcus pneumoniae (strain 70585)</name>
    <dbReference type="NCBI Taxonomy" id="488221"/>
    <lineage>
        <taxon>Bacteria</taxon>
        <taxon>Bacillati</taxon>
        <taxon>Bacillota</taxon>
        <taxon>Bacilli</taxon>
        <taxon>Lactobacillales</taxon>
        <taxon>Streptococcaceae</taxon>
        <taxon>Streptococcus</taxon>
    </lineage>
</organism>
<proteinExistence type="inferred from homology"/>